<accession>Q5WSE6</accession>
<name>RL34_LEGPL</name>
<organism>
    <name type="scientific">Legionella pneumophila (strain Lens)</name>
    <dbReference type="NCBI Taxonomy" id="297245"/>
    <lineage>
        <taxon>Bacteria</taxon>
        <taxon>Pseudomonadati</taxon>
        <taxon>Pseudomonadota</taxon>
        <taxon>Gammaproteobacteria</taxon>
        <taxon>Legionellales</taxon>
        <taxon>Legionellaceae</taxon>
        <taxon>Legionella</taxon>
    </lineage>
</organism>
<gene>
    <name evidence="1" type="primary">rpmH</name>
    <name type="ordered locus">lpl2933</name>
</gene>
<reference key="1">
    <citation type="journal article" date="2004" name="Nat. Genet.">
        <title>Evidence in the Legionella pneumophila genome for exploitation of host cell functions and high genome plasticity.</title>
        <authorList>
            <person name="Cazalet C."/>
            <person name="Rusniok C."/>
            <person name="Brueggemann H."/>
            <person name="Zidane N."/>
            <person name="Magnier A."/>
            <person name="Ma L."/>
            <person name="Tichit M."/>
            <person name="Jarraud S."/>
            <person name="Bouchier C."/>
            <person name="Vandenesch F."/>
            <person name="Kunst F."/>
            <person name="Etienne J."/>
            <person name="Glaser P."/>
            <person name="Buchrieser C."/>
        </authorList>
    </citation>
    <scope>NUCLEOTIDE SEQUENCE [LARGE SCALE GENOMIC DNA]</scope>
    <source>
        <strain>Lens</strain>
    </source>
</reference>
<comment type="similarity">
    <text evidence="1">Belongs to the bacterial ribosomal protein bL34 family.</text>
</comment>
<protein>
    <recommendedName>
        <fullName evidence="1">Large ribosomal subunit protein bL34</fullName>
    </recommendedName>
    <alternativeName>
        <fullName evidence="2">50S ribosomal protein L34</fullName>
    </alternativeName>
</protein>
<keyword id="KW-0687">Ribonucleoprotein</keyword>
<keyword id="KW-0689">Ribosomal protein</keyword>
<feature type="chain" id="PRO_0000187399" description="Large ribosomal subunit protein bL34">
    <location>
        <begin position="1"/>
        <end position="44"/>
    </location>
</feature>
<sequence length="44" mass="5322">MKRTFQPSNLKRKRDHGFRLRMSTRAGRLVIKRRRAKGRKRLSA</sequence>
<proteinExistence type="inferred from homology"/>
<evidence type="ECO:0000255" key="1">
    <source>
        <dbReference type="HAMAP-Rule" id="MF_00391"/>
    </source>
</evidence>
<evidence type="ECO:0000305" key="2"/>
<dbReference type="EMBL" id="CR628337">
    <property type="protein sequence ID" value="CAH17177.1"/>
    <property type="molecule type" value="Genomic_DNA"/>
</dbReference>
<dbReference type="RefSeq" id="WP_010948689.1">
    <property type="nucleotide sequence ID" value="NC_006369.1"/>
</dbReference>
<dbReference type="SMR" id="Q5WSE6"/>
<dbReference type="GeneID" id="57037010"/>
<dbReference type="KEGG" id="lpf:lpl2933"/>
<dbReference type="LegioList" id="lpl2933"/>
<dbReference type="HOGENOM" id="CLU_129938_2_0_6"/>
<dbReference type="Proteomes" id="UP000002517">
    <property type="component" value="Chromosome"/>
</dbReference>
<dbReference type="GO" id="GO:1990904">
    <property type="term" value="C:ribonucleoprotein complex"/>
    <property type="evidence" value="ECO:0007669"/>
    <property type="project" value="UniProtKB-KW"/>
</dbReference>
<dbReference type="GO" id="GO:0005840">
    <property type="term" value="C:ribosome"/>
    <property type="evidence" value="ECO:0007669"/>
    <property type="project" value="UniProtKB-KW"/>
</dbReference>
<dbReference type="GO" id="GO:0003735">
    <property type="term" value="F:structural constituent of ribosome"/>
    <property type="evidence" value="ECO:0007669"/>
    <property type="project" value="InterPro"/>
</dbReference>
<dbReference type="GO" id="GO:0006412">
    <property type="term" value="P:translation"/>
    <property type="evidence" value="ECO:0007669"/>
    <property type="project" value="UniProtKB-UniRule"/>
</dbReference>
<dbReference type="FunFam" id="1.10.287.3980:FF:000001">
    <property type="entry name" value="Mitochondrial ribosomal protein L34"/>
    <property type="match status" value="1"/>
</dbReference>
<dbReference type="Gene3D" id="1.10.287.3980">
    <property type="match status" value="1"/>
</dbReference>
<dbReference type="HAMAP" id="MF_00391">
    <property type="entry name" value="Ribosomal_bL34"/>
    <property type="match status" value="1"/>
</dbReference>
<dbReference type="InterPro" id="IPR000271">
    <property type="entry name" value="Ribosomal_bL34"/>
</dbReference>
<dbReference type="InterPro" id="IPR020939">
    <property type="entry name" value="Ribosomal_bL34_CS"/>
</dbReference>
<dbReference type="NCBIfam" id="TIGR01030">
    <property type="entry name" value="rpmH_bact"/>
    <property type="match status" value="1"/>
</dbReference>
<dbReference type="PANTHER" id="PTHR14503:SF4">
    <property type="entry name" value="LARGE RIBOSOMAL SUBUNIT PROTEIN BL34M"/>
    <property type="match status" value="1"/>
</dbReference>
<dbReference type="PANTHER" id="PTHR14503">
    <property type="entry name" value="MITOCHONDRIAL RIBOSOMAL PROTEIN 34 FAMILY MEMBER"/>
    <property type="match status" value="1"/>
</dbReference>
<dbReference type="Pfam" id="PF00468">
    <property type="entry name" value="Ribosomal_L34"/>
    <property type="match status" value="1"/>
</dbReference>
<dbReference type="PROSITE" id="PS00784">
    <property type="entry name" value="RIBOSOMAL_L34"/>
    <property type="match status" value="1"/>
</dbReference>